<dbReference type="EC" id="7.1.1.2" evidence="1"/>
<dbReference type="EMBL" id="X79547">
    <property type="protein sequence ID" value="CAA56086.1"/>
    <property type="molecule type" value="Genomic_DNA"/>
</dbReference>
<dbReference type="PIR" id="T11864">
    <property type="entry name" value="T11864"/>
</dbReference>
<dbReference type="RefSeq" id="NP_007167.1">
    <property type="nucleotide sequence ID" value="NC_001640.1"/>
</dbReference>
<dbReference type="SMR" id="P48654"/>
<dbReference type="FunCoup" id="P48654">
    <property type="interactions" value="116"/>
</dbReference>
<dbReference type="STRING" id="9796.ENSECAP00000023102"/>
<dbReference type="PaxDb" id="9796-ENSECAP00000023102"/>
<dbReference type="Ensembl" id="ENSECAT00000029835.1">
    <property type="protein sequence ID" value="ENSECAP00000023102.1"/>
    <property type="gene ID" value="ENSECAG00000027695.1"/>
</dbReference>
<dbReference type="KEGG" id="ecb:807855"/>
<dbReference type="VGNC" id="VGNC:59018">
    <property type="gene designation" value="MT-ND3"/>
</dbReference>
<dbReference type="GeneTree" id="ENSGT00390000011605"/>
<dbReference type="HOGENOM" id="CLU_119549_3_1_1"/>
<dbReference type="InParanoid" id="P48654"/>
<dbReference type="OMA" id="GPRRYNR"/>
<dbReference type="OrthoDB" id="154075at2759"/>
<dbReference type="Proteomes" id="UP000002281">
    <property type="component" value="Mitochondrion"/>
</dbReference>
<dbReference type="Bgee" id="ENSECAG00000027695">
    <property type="expression patterns" value="Expressed in triceps brachii and 23 other cell types or tissues"/>
</dbReference>
<dbReference type="ExpressionAtlas" id="P48654">
    <property type="expression patterns" value="baseline"/>
</dbReference>
<dbReference type="GO" id="GO:0005743">
    <property type="term" value="C:mitochondrial inner membrane"/>
    <property type="evidence" value="ECO:0000250"/>
    <property type="project" value="UniProtKB"/>
</dbReference>
<dbReference type="GO" id="GO:0045271">
    <property type="term" value="C:respiratory chain complex I"/>
    <property type="evidence" value="ECO:0000318"/>
    <property type="project" value="GO_Central"/>
</dbReference>
<dbReference type="GO" id="GO:0008137">
    <property type="term" value="F:NADH dehydrogenase (ubiquinone) activity"/>
    <property type="evidence" value="ECO:0000250"/>
    <property type="project" value="UniProtKB"/>
</dbReference>
<dbReference type="GO" id="GO:0006120">
    <property type="term" value="P:mitochondrial electron transport, NADH to ubiquinone"/>
    <property type="evidence" value="ECO:0000250"/>
    <property type="project" value="UniProtKB"/>
</dbReference>
<dbReference type="FunFam" id="1.20.58.1610:FF:000004">
    <property type="entry name" value="NADH-quinone oxidoreductase subunit A"/>
    <property type="match status" value="1"/>
</dbReference>
<dbReference type="Gene3D" id="1.20.58.1610">
    <property type="entry name" value="NADH:ubiquinone/plastoquinone oxidoreductase, chain 3"/>
    <property type="match status" value="1"/>
</dbReference>
<dbReference type="InterPro" id="IPR000440">
    <property type="entry name" value="NADH_UbQ/plastoQ_OxRdtase_su3"/>
</dbReference>
<dbReference type="InterPro" id="IPR038430">
    <property type="entry name" value="NDAH_ubi_oxred_su3_sf"/>
</dbReference>
<dbReference type="PANTHER" id="PTHR11058">
    <property type="entry name" value="NADH-UBIQUINONE OXIDOREDUCTASE CHAIN 3"/>
    <property type="match status" value="1"/>
</dbReference>
<dbReference type="PANTHER" id="PTHR11058:SF9">
    <property type="entry name" value="NADH-UBIQUINONE OXIDOREDUCTASE CHAIN 3"/>
    <property type="match status" value="1"/>
</dbReference>
<dbReference type="Pfam" id="PF00507">
    <property type="entry name" value="Oxidored_q4"/>
    <property type="match status" value="1"/>
</dbReference>
<protein>
    <recommendedName>
        <fullName evidence="1">NADH-ubiquinone oxidoreductase chain 3</fullName>
        <ecNumber evidence="1">7.1.1.2</ecNumber>
    </recommendedName>
    <alternativeName>
        <fullName>NADH dehydrogenase subunit 3</fullName>
    </alternativeName>
</protein>
<accession>P48654</accession>
<proteinExistence type="inferred from homology"/>
<gene>
    <name evidence="1" type="primary">MT-ND3</name>
    <name type="synonym">MTND3</name>
    <name type="synonym">NADH3</name>
    <name type="synonym">ND3</name>
</gene>
<comment type="function">
    <text evidence="1">Core subunit of the mitochondrial membrane respiratory chain NADH dehydrogenase (Complex I) which catalyzes electron transfer from NADH through the respiratory chain, using ubiquinone as an electron acceptor. Essential for the catalytic activity of complex I.</text>
</comment>
<comment type="catalytic activity">
    <reaction evidence="1">
        <text>a ubiquinone + NADH + 5 H(+)(in) = a ubiquinol + NAD(+) + 4 H(+)(out)</text>
        <dbReference type="Rhea" id="RHEA:29091"/>
        <dbReference type="Rhea" id="RHEA-COMP:9565"/>
        <dbReference type="Rhea" id="RHEA-COMP:9566"/>
        <dbReference type="ChEBI" id="CHEBI:15378"/>
        <dbReference type="ChEBI" id="CHEBI:16389"/>
        <dbReference type="ChEBI" id="CHEBI:17976"/>
        <dbReference type="ChEBI" id="CHEBI:57540"/>
        <dbReference type="ChEBI" id="CHEBI:57945"/>
        <dbReference type="EC" id="7.1.1.2"/>
    </reaction>
</comment>
<comment type="subunit">
    <text evidence="1">Core subunit of respiratory chain NADH dehydrogenase (Complex I) which is composed of 45 different subunits. Interacts with TMEM186. Interacts with TMEM242 (By similarity).</text>
</comment>
<comment type="subcellular location">
    <subcellularLocation>
        <location evidence="2">Mitochondrion inner membrane</location>
        <topology evidence="3">Multi-pass membrane protein</topology>
    </subcellularLocation>
</comment>
<comment type="similarity">
    <text evidence="4">Belongs to the complex I subunit 3 family.</text>
</comment>
<name>NU3M_HORSE</name>
<keyword id="KW-0249">Electron transport</keyword>
<keyword id="KW-0472">Membrane</keyword>
<keyword id="KW-0496">Mitochondrion</keyword>
<keyword id="KW-0999">Mitochondrion inner membrane</keyword>
<keyword id="KW-0520">NAD</keyword>
<keyword id="KW-1185">Reference proteome</keyword>
<keyword id="KW-0679">Respiratory chain</keyword>
<keyword id="KW-1278">Translocase</keyword>
<keyword id="KW-0812">Transmembrane</keyword>
<keyword id="KW-1133">Transmembrane helix</keyword>
<keyword id="KW-0813">Transport</keyword>
<keyword id="KW-0830">Ubiquinone</keyword>
<feature type="chain" id="PRO_0000117751" description="NADH-ubiquinone oxidoreductase chain 3">
    <location>
        <begin position="1"/>
        <end position="115"/>
    </location>
</feature>
<feature type="transmembrane region" description="Helical" evidence="3">
    <location>
        <begin position="3"/>
        <end position="23"/>
    </location>
</feature>
<feature type="transmembrane region" description="Helical" evidence="3">
    <location>
        <begin position="55"/>
        <end position="75"/>
    </location>
</feature>
<feature type="transmembrane region" description="Helical" evidence="3">
    <location>
        <begin position="84"/>
        <end position="104"/>
    </location>
</feature>
<sequence length="115" mass="13017">MNLMLTLLTNTLLASLLVLIAFWLPQLNIYAEKTSPYECGFDPMGSARLPFSMKFFLVAITFLLFDLEIALLLPLPWASQTTNLNTMLIMALVLISLLAISLAYEWTQKGLEWTE</sequence>
<reference key="1">
    <citation type="journal article" date="1994" name="Gene">
        <title>The complete mitochondrial DNA sequence of the horse, Equus caballus: extensive heteroplasmy of the control region.</title>
        <authorList>
            <person name="Xu X."/>
            <person name="Arnason U."/>
        </authorList>
    </citation>
    <scope>NUCLEOTIDE SEQUENCE [LARGE SCALE GENOMIC DNA]</scope>
    <source>
        <strain evidence="5">Thoroughbred</strain>
    </source>
</reference>
<organism>
    <name type="scientific">Equus caballus</name>
    <name type="common">Horse</name>
    <dbReference type="NCBI Taxonomy" id="9796"/>
    <lineage>
        <taxon>Eukaryota</taxon>
        <taxon>Metazoa</taxon>
        <taxon>Chordata</taxon>
        <taxon>Craniata</taxon>
        <taxon>Vertebrata</taxon>
        <taxon>Euteleostomi</taxon>
        <taxon>Mammalia</taxon>
        <taxon>Eutheria</taxon>
        <taxon>Laurasiatheria</taxon>
        <taxon>Perissodactyla</taxon>
        <taxon>Equidae</taxon>
        <taxon>Equus</taxon>
    </lineage>
</organism>
<evidence type="ECO:0000250" key="1">
    <source>
        <dbReference type="UniProtKB" id="P03897"/>
    </source>
</evidence>
<evidence type="ECO:0000250" key="2">
    <source>
        <dbReference type="UniProtKB" id="P03898"/>
    </source>
</evidence>
<evidence type="ECO:0000255" key="3"/>
<evidence type="ECO:0000305" key="4"/>
<evidence type="ECO:0000312" key="5">
    <source>
        <dbReference type="Proteomes" id="UP000002281"/>
    </source>
</evidence>
<geneLocation type="mitochondrion"/>